<proteinExistence type="evidence at protein level"/>
<gene>
    <name type="primary">Epas1</name>
    <name type="synonym">Hif2a</name>
</gene>
<protein>
    <recommendedName>
        <fullName>Endothelial PAS domain-containing protein 1</fullName>
        <shortName>EPAS-1</shortName>
    </recommendedName>
    <alternativeName>
        <fullName>HIF-1-alpha-like factor</fullName>
        <shortName>HLF</shortName>
        <shortName>mHLF</shortName>
    </alternativeName>
    <alternativeName>
        <fullName>HIF-related factor</fullName>
        <shortName>HRF</shortName>
    </alternativeName>
    <alternativeName>
        <fullName>Hypoxia-inducible factor 2-alpha</fullName>
        <shortName>HIF-2-alpha</shortName>
        <shortName>HIF2-alpha</shortName>
    </alternativeName>
</protein>
<accession>P97481</accession>
<accession>O08787</accession>
<accession>O55046</accession>
<keyword id="KW-0002">3D-structure</keyword>
<keyword id="KW-0010">Activator</keyword>
<keyword id="KW-0037">Angiogenesis</keyword>
<keyword id="KW-0217">Developmental protein</keyword>
<keyword id="KW-0221">Differentiation</keyword>
<keyword id="KW-0903">Direct protein sequencing</keyword>
<keyword id="KW-0238">DNA-binding</keyword>
<keyword id="KW-0379">Hydroxylation</keyword>
<keyword id="KW-0539">Nucleus</keyword>
<keyword id="KW-0597">Phosphoprotein</keyword>
<keyword id="KW-1185">Reference proteome</keyword>
<keyword id="KW-0677">Repeat</keyword>
<keyword id="KW-0804">Transcription</keyword>
<keyword id="KW-0805">Transcription regulation</keyword>
<keyword id="KW-0832">Ubl conjugation</keyword>
<evidence type="ECO:0000250" key="1"/>
<evidence type="ECO:0000250" key="2">
    <source>
        <dbReference type="UniProtKB" id="Q99814"/>
    </source>
</evidence>
<evidence type="ECO:0000255" key="3">
    <source>
        <dbReference type="PROSITE-ProRule" id="PRU00140"/>
    </source>
</evidence>
<evidence type="ECO:0000255" key="4">
    <source>
        <dbReference type="PROSITE-ProRule" id="PRU00981"/>
    </source>
</evidence>
<evidence type="ECO:0000256" key="5">
    <source>
        <dbReference type="SAM" id="MobiDB-lite"/>
    </source>
</evidence>
<evidence type="ECO:0000269" key="6">
    <source>
    </source>
</evidence>
<evidence type="ECO:0000269" key="7">
    <source>
    </source>
</evidence>
<evidence type="ECO:0000269" key="8">
    <source>
    </source>
</evidence>
<evidence type="ECO:0000269" key="9">
    <source>
    </source>
</evidence>
<evidence type="ECO:0000269" key="10">
    <source>
    </source>
</evidence>
<evidence type="ECO:0000305" key="11"/>
<evidence type="ECO:0007744" key="12">
    <source>
        <dbReference type="PDB" id="4ZP4"/>
    </source>
</evidence>
<evidence type="ECO:0007744" key="13">
    <source>
        <dbReference type="PDB" id="4ZPH"/>
    </source>
</evidence>
<evidence type="ECO:0007744" key="14">
    <source>
        <dbReference type="PDB" id="4ZPK"/>
    </source>
</evidence>
<evidence type="ECO:0007744" key="15">
    <source>
        <dbReference type="PDB" id="4ZQD"/>
    </source>
</evidence>
<evidence type="ECO:0007829" key="16">
    <source>
        <dbReference type="PDB" id="4ZP4"/>
    </source>
</evidence>
<evidence type="ECO:0007829" key="17">
    <source>
        <dbReference type="PDB" id="6E3S"/>
    </source>
</evidence>
<reference key="1">
    <citation type="journal article" date="1997" name="Genes Dev.">
        <title>Endothelial PAS domain protein 1 (EPAS1), a transcription factor selectively expressed in endothelial cells.</title>
        <authorList>
            <person name="Tian H."/>
            <person name="McKnight S.L."/>
            <person name="Russell D.W."/>
        </authorList>
    </citation>
    <scope>NUCLEOTIDE SEQUENCE [MRNA]</scope>
    <source>
        <tissue>Brain</tissue>
    </source>
</reference>
<reference key="2">
    <citation type="journal article" date="1997" name="Proc. Natl. Acad. Sci. U.S.A.">
        <title>A novel bHLH-PAS factor with close sequence similarity to hypoxia-inducible factor 1alpha regulates the VEGF expression and is potentially involved in lung and vascular development.</title>
        <authorList>
            <person name="Ema M."/>
            <person name="Taya S."/>
            <person name="Yokotani N."/>
            <person name="Sogawa K."/>
            <person name="Matsuda Y."/>
            <person name="Fujii-Kuriyama Y."/>
        </authorList>
    </citation>
    <scope>NUCLEOTIDE SEQUENCE [MRNA]</scope>
    <source>
        <strain>C57BL/6J</strain>
        <tissue>Hypothalamus</tissue>
        <tissue>Skeletal muscle</tissue>
    </source>
</reference>
<reference key="3">
    <citation type="journal article" date="1997" name="Mech. Dev.">
        <title>HRF, a putative basic helix-loop-helix-PAS-domain transcription factor is closely related to hypoxia-inducible factor-1 alpha and developmentally expressed in blood vessels.</title>
        <authorList>
            <person name="Flamme I."/>
            <person name="Froehlich T."/>
            <person name="von Reutern M."/>
            <person name="Kappel A."/>
            <person name="Damert A."/>
            <person name="Risau W."/>
        </authorList>
    </citation>
    <scope>NUCLEOTIDE SEQUENCE [MRNA]</scope>
    <source>
        <tissue>Brain capillary</tissue>
    </source>
</reference>
<reference key="4">
    <citation type="journal article" date="2002" name="Genes Dev.">
        <title>FIH-1 is an asparaginyl hydroxylase enzyme that regulates the transcriptional activity of hypoxia-inducible factor.</title>
        <authorList>
            <person name="Lando D."/>
            <person name="Peet D.J."/>
            <person name="Gorman J.J."/>
            <person name="Whelan D.A."/>
            <person name="Whitelaw M.L."/>
            <person name="Bruick R.K."/>
        </authorList>
    </citation>
    <scope>PROTEIN SEQUENCE OF 846-864</scope>
    <scope>MUTAGENESIS OF PRO-530 AND ASN-851</scope>
</reference>
<reference key="5">
    <citation type="journal article" date="2002" name="J. Biol. Chem.">
        <title>The transcriptional activation function of the HIF-like factor requires phosphorylation at a conserved threonine.</title>
        <authorList>
            <person name="Gradin K."/>
            <person name="Takasaki C."/>
            <person name="Fujii-Kuriyama Y."/>
            <person name="Sogawa K."/>
        </authorList>
    </citation>
    <scope>INTERACTION WITH CREBBP</scope>
    <scope>PHOSPHORYLATION AT THR-844</scope>
    <scope>MUTAGENESIS OF THR-844</scope>
</reference>
<reference key="6">
    <citation type="journal article" date="2002" name="Science">
        <title>Asparagine hydroxylation of the HIF transactivation domain a hypoxic switch.</title>
        <authorList>
            <person name="Lando D."/>
            <person name="Peet D.J."/>
            <person name="Whelan D.A."/>
            <person name="Gorman J.J."/>
            <person name="Whitelaw M.L."/>
        </authorList>
    </citation>
    <scope>HYDROXYLATION AT ASN-851</scope>
</reference>
<reference key="7">
    <citation type="journal article" date="2011" name="Cell Death Differ.">
        <title>Pro-apoptotic activity of inhibitory PAS domain protein (IPAS), a negative regulator of HIF-1, through binding to pro-survival Bcl-2 family proteins.</title>
        <authorList>
            <person name="Torii S."/>
            <person name="Goto Y."/>
            <person name="Ishizawa T."/>
            <person name="Hoshi H."/>
            <person name="Goryo K."/>
            <person name="Yasumoto K."/>
            <person name="Fukumura H."/>
            <person name="Sogawa K."/>
        </authorList>
    </citation>
    <scope>INTERACTION WITH HIF3A</scope>
    <scope>SUBCELLULAR LOCATION</scope>
</reference>
<reference evidence="12 13 14 15" key="8">
    <citation type="journal article" date="2015" name="Nature">
        <title>Structural integration in hypoxia-inducible factors.</title>
        <authorList>
            <person name="Wu D."/>
            <person name="Potluri N."/>
            <person name="Lu J."/>
            <person name="Kim Y."/>
            <person name="Rastinejad F."/>
        </authorList>
    </citation>
    <scope>X-RAY CRYSTALLOGRAPHY (2.35 ANGSTROMS) OF 3-361 IN COMPLEXES WITH ARNT; INHIBITOR AND DNA</scope>
    <scope>MUTAGENESIS OF ALA-23; ARG-27; PHE-169; ARG-171; ASN-184; LYS-186; VAL-192 AND HIS-194</scope>
    <scope>REGION</scope>
    <scope>FUNCTION</scope>
    <scope>INTERACTION WITH ARNT</scope>
</reference>
<comment type="function">
    <text evidence="1 10">Transcription factor involved in the induction of oxygen regulated genes. Heterodimerizes with ARNT; heterodimer binds to core DNA sequence 5'-TACGTG-3' within the hypoxia response element (HRE) of target gene promoters (PubMed:26245371). Regulates the vascular endothelial growth factor (VEGF) expression and seems to be implicated in the development of blood vessels and the tubular system of lung. May also play a role in the formation of the endothelium that gives rise to the blood brain barrier. Potent activator of the Tie-2 tyrosine kinase expression. Activation requires recruitment of transcriptional coactivators such as CREBBP and probably EP300. Interaction with redox regulatory protein APEX seems to activate CTAD (By similarity).</text>
</comment>
<comment type="subunit">
    <text evidence="2 7 9 10">Interacts with HIF3A isoform 2 (PubMed:21546903). Efficient DNA binding requires dimerization with another bHLH protein. Heterodimerizes with ARNT; heterodimer binds to core DNA sequence 5'-TACGTG-3' within the hypoxia response element (HRE) of target gene promoters (PubMed:26245371). Interacts with CREBBP (PubMed:11983697). Interacts with EGLN1. Interacts with VHL (By similarity).</text>
</comment>
<comment type="interaction">
    <interactant intactId="EBI-15704570">
        <id>P97481</id>
    </interactant>
    <interactant intactId="EBI-78852">
        <id>P53762</id>
        <label>Arnt</label>
    </interactant>
    <organismsDiffer>false</organismsDiffer>
    <experiments>5</experiments>
</comment>
<comment type="subcellular location">
    <subcellularLocation>
        <location evidence="4 9">Nucleus</location>
    </subcellularLocation>
    <subcellularLocation>
        <location evidence="9">Nucleus speckle</location>
    </subcellularLocation>
    <text evidence="9">Colocalizes with HIF3A isoform 2 in the nucleus and speckles.</text>
</comment>
<comment type="tissue specificity">
    <text>Expressed in most tissues, with highest levels in lung, followed by heart, kidney, brain and liver. Predominantly expressed in endothelial cells. Also found in smooth muscle cells of the uterus, neurons, and brown adipose tissue. High expression in embryonic choroid plexus and kidney glomeruli.</text>
</comment>
<comment type="developmental stage">
    <text>In day 11 embryo, expression is almost exclusively seen in endothelial cells of the intersegmental blood vessels separating the somites, the atrial and ventricular chambers of the heart, and the dorsal aorta. High expression also occurs in extraembryonic membranes. In the developing brain of day 13 embryo, endothelial cells of the highly vascularized choroid plexus contain high levels of EPAS1.</text>
</comment>
<comment type="PTM">
    <text evidence="1">In normoxia, is probably hydroxylated on Pro-405 and Pro-530 by EGLN1/PHD1, EGLN2/PHD2 and/or EGLN3/PHD3. The hydroxylated prolines promote interaction with VHL, initiating rapid ubiquitination and subsequent proteasomal degradation. Under hypoxia, proline hydroxylation is impaired and ubiquitination is attenuated, resulting in stabilization (By similarity).</text>
</comment>
<comment type="PTM">
    <text evidence="6">In normoxia, is hydroxylated on Asn-851 by HIF1AN thus probably abrogating interaction with CREBBP and EP300 and preventing transcriptional activation.</text>
</comment>
<comment type="PTM">
    <text evidence="7">Phosphorylated on multiple sites in the CTAD.</text>
</comment>
<comment type="PTM">
    <text evidence="6">The iron and 2-oxoglutarate dependent 3-hydroxylation of asparagine is (S) stereospecific within HIF CTAD domains.</text>
</comment>
<dbReference type="EMBL" id="U81983">
    <property type="protein sequence ID" value="AAB41496.1"/>
    <property type="molecule type" value="mRNA"/>
</dbReference>
<dbReference type="EMBL" id="D89787">
    <property type="protein sequence ID" value="BAA20130.1"/>
    <property type="molecule type" value="mRNA"/>
</dbReference>
<dbReference type="EMBL" id="AF045160">
    <property type="protein sequence ID" value="AAC12871.1"/>
    <property type="molecule type" value="mRNA"/>
</dbReference>
<dbReference type="CCDS" id="CCDS37713.1"/>
<dbReference type="RefSeq" id="NP_034267.3">
    <property type="nucleotide sequence ID" value="NM_010137.3"/>
</dbReference>
<dbReference type="PDB" id="4ZP4">
    <property type="method" value="X-ray"/>
    <property type="resolution" value="2.35 A"/>
    <property type="chains" value="B/D=3-361"/>
</dbReference>
<dbReference type="PDB" id="4ZPH">
    <property type="method" value="X-ray"/>
    <property type="resolution" value="2.80 A"/>
    <property type="chains" value="B/D=3-361"/>
</dbReference>
<dbReference type="PDB" id="4ZPK">
    <property type="method" value="X-ray"/>
    <property type="resolution" value="3.60 A"/>
    <property type="chains" value="B=3-361"/>
</dbReference>
<dbReference type="PDB" id="4ZQD">
    <property type="method" value="X-ray"/>
    <property type="resolution" value="2.87 A"/>
    <property type="chains" value="B/D=3-361"/>
</dbReference>
<dbReference type="PDB" id="6E3S">
    <property type="method" value="X-ray"/>
    <property type="resolution" value="3.00 A"/>
    <property type="chains" value="B=3-362"/>
</dbReference>
<dbReference type="PDB" id="6E3T">
    <property type="method" value="X-ray"/>
    <property type="resolution" value="3.00 A"/>
    <property type="chains" value="B=3-362"/>
</dbReference>
<dbReference type="PDB" id="6E3U">
    <property type="method" value="X-ray"/>
    <property type="resolution" value="2.85 A"/>
    <property type="chains" value="B=3-362"/>
</dbReference>
<dbReference type="PDB" id="7W80">
    <property type="method" value="X-ray"/>
    <property type="resolution" value="2.75 A"/>
    <property type="chains" value="B=3-361"/>
</dbReference>
<dbReference type="PDB" id="8VHG">
    <property type="method" value="EM"/>
    <property type="resolution" value="3.60 A"/>
    <property type="chains" value="A=3-361"/>
</dbReference>
<dbReference type="PDBsum" id="4ZP4"/>
<dbReference type="PDBsum" id="4ZPH"/>
<dbReference type="PDBsum" id="4ZPK"/>
<dbReference type="PDBsum" id="4ZQD"/>
<dbReference type="PDBsum" id="6E3S"/>
<dbReference type="PDBsum" id="6E3T"/>
<dbReference type="PDBsum" id="6E3U"/>
<dbReference type="PDBsum" id="7W80"/>
<dbReference type="PDBsum" id="8VHG"/>
<dbReference type="EMDB" id="EMD-43237"/>
<dbReference type="SMR" id="P97481"/>
<dbReference type="BioGRID" id="199458">
    <property type="interactions" value="23"/>
</dbReference>
<dbReference type="CORUM" id="P97481"/>
<dbReference type="DIP" id="DIP-46109N"/>
<dbReference type="FunCoup" id="P97481">
    <property type="interactions" value="1365"/>
</dbReference>
<dbReference type="IntAct" id="P97481">
    <property type="interactions" value="4"/>
</dbReference>
<dbReference type="STRING" id="10090.ENSMUSP00000024954"/>
<dbReference type="GlyGen" id="P97481">
    <property type="glycosylation" value="3 sites"/>
</dbReference>
<dbReference type="iPTMnet" id="P97481"/>
<dbReference type="PhosphoSitePlus" id="P97481"/>
<dbReference type="jPOST" id="P97481"/>
<dbReference type="PaxDb" id="10090-ENSMUSP00000024954"/>
<dbReference type="Antibodypedia" id="29965">
    <property type="antibodies" value="732 antibodies from 40 providers"/>
</dbReference>
<dbReference type="DNASU" id="13819"/>
<dbReference type="Ensembl" id="ENSMUST00000024954.11">
    <property type="protein sequence ID" value="ENSMUSP00000024954.10"/>
    <property type="gene ID" value="ENSMUSG00000024140.11"/>
</dbReference>
<dbReference type="GeneID" id="13819"/>
<dbReference type="KEGG" id="mmu:13819"/>
<dbReference type="UCSC" id="uc008duj.2">
    <property type="organism name" value="mouse"/>
</dbReference>
<dbReference type="AGR" id="MGI:109169"/>
<dbReference type="CTD" id="2034"/>
<dbReference type="MGI" id="MGI:109169">
    <property type="gene designation" value="Epas1"/>
</dbReference>
<dbReference type="VEuPathDB" id="HostDB:ENSMUSG00000024140"/>
<dbReference type="eggNOG" id="KOG3558">
    <property type="taxonomic scope" value="Eukaryota"/>
</dbReference>
<dbReference type="GeneTree" id="ENSGT00940000155930"/>
<dbReference type="HOGENOM" id="CLU_010044_3_1_1"/>
<dbReference type="InParanoid" id="P97481"/>
<dbReference type="OMA" id="KTEPDHR"/>
<dbReference type="OrthoDB" id="6021714at2759"/>
<dbReference type="PhylomeDB" id="P97481"/>
<dbReference type="TreeFam" id="TF317772"/>
<dbReference type="Reactome" id="R-MMU-1234158">
    <property type="pathway name" value="Regulation of gene expression by Hypoxia-inducible Factor"/>
</dbReference>
<dbReference type="Reactome" id="R-MMU-1234174">
    <property type="pathway name" value="Cellular response to hypoxia"/>
</dbReference>
<dbReference type="Reactome" id="R-MMU-1234176">
    <property type="pathway name" value="Oxygen-dependent proline hydroxylation of Hypoxia-inducible Factor Alpha"/>
</dbReference>
<dbReference type="Reactome" id="R-MMU-8951664">
    <property type="pathway name" value="Neddylation"/>
</dbReference>
<dbReference type="BioGRID-ORCS" id="13819">
    <property type="hits" value="2 hits in 80 CRISPR screens"/>
</dbReference>
<dbReference type="ChiTaRS" id="Epas1">
    <property type="organism name" value="mouse"/>
</dbReference>
<dbReference type="EvolutionaryTrace" id="P97481"/>
<dbReference type="PRO" id="PR:P97481"/>
<dbReference type="Proteomes" id="UP000000589">
    <property type="component" value="Chromosome 17"/>
</dbReference>
<dbReference type="RNAct" id="P97481">
    <property type="molecule type" value="protein"/>
</dbReference>
<dbReference type="Bgee" id="ENSMUSG00000024140">
    <property type="expression patterns" value="Expressed in right lung lobe and 267 other cell types or tissues"/>
</dbReference>
<dbReference type="GO" id="GO:0005737">
    <property type="term" value="C:cytoplasm"/>
    <property type="evidence" value="ECO:0000314"/>
    <property type="project" value="MGI"/>
</dbReference>
<dbReference type="GO" id="GO:0016607">
    <property type="term" value="C:nuclear speck"/>
    <property type="evidence" value="ECO:0000314"/>
    <property type="project" value="UniProtKB"/>
</dbReference>
<dbReference type="GO" id="GO:0005634">
    <property type="term" value="C:nucleus"/>
    <property type="evidence" value="ECO:0000314"/>
    <property type="project" value="UniProtKB"/>
</dbReference>
<dbReference type="GO" id="GO:0005667">
    <property type="term" value="C:transcription regulator complex"/>
    <property type="evidence" value="ECO:0000314"/>
    <property type="project" value="MGI"/>
</dbReference>
<dbReference type="GO" id="GO:0000987">
    <property type="term" value="F:cis-regulatory region sequence-specific DNA binding"/>
    <property type="evidence" value="ECO:0000314"/>
    <property type="project" value="MGI"/>
</dbReference>
<dbReference type="GO" id="GO:0003677">
    <property type="term" value="F:DNA binding"/>
    <property type="evidence" value="ECO:0000314"/>
    <property type="project" value="MGI"/>
</dbReference>
<dbReference type="GO" id="GO:0001228">
    <property type="term" value="F:DNA-binding transcription activator activity, RNA polymerase II-specific"/>
    <property type="evidence" value="ECO:0000314"/>
    <property type="project" value="MGI"/>
</dbReference>
<dbReference type="GO" id="GO:0003700">
    <property type="term" value="F:DNA-binding transcription factor activity"/>
    <property type="evidence" value="ECO:0000314"/>
    <property type="project" value="MGI"/>
</dbReference>
<dbReference type="GO" id="GO:0046982">
    <property type="term" value="F:protein heterodimerization activity"/>
    <property type="evidence" value="ECO:0000314"/>
    <property type="project" value="UniProtKB"/>
</dbReference>
<dbReference type="GO" id="GO:0000978">
    <property type="term" value="F:RNA polymerase II cis-regulatory region sequence-specific DNA binding"/>
    <property type="evidence" value="ECO:0000316"/>
    <property type="project" value="MGI"/>
</dbReference>
<dbReference type="GO" id="GO:0061629">
    <property type="term" value="F:RNA polymerase II-specific DNA-binding transcription factor binding"/>
    <property type="evidence" value="ECO:0007669"/>
    <property type="project" value="Ensembl"/>
</dbReference>
<dbReference type="GO" id="GO:0043565">
    <property type="term" value="F:sequence-specific DNA binding"/>
    <property type="evidence" value="ECO:0000314"/>
    <property type="project" value="UniProtKB"/>
</dbReference>
<dbReference type="GO" id="GO:0001223">
    <property type="term" value="F:transcription coactivator binding"/>
    <property type="evidence" value="ECO:0000250"/>
    <property type="project" value="UniProtKB"/>
</dbReference>
<dbReference type="GO" id="GO:0001525">
    <property type="term" value="P:angiogenesis"/>
    <property type="evidence" value="ECO:0000315"/>
    <property type="project" value="MGI"/>
</dbReference>
<dbReference type="GO" id="GO:0001974">
    <property type="term" value="P:blood vessel remodeling"/>
    <property type="evidence" value="ECO:0000315"/>
    <property type="project" value="MGI"/>
</dbReference>
<dbReference type="GO" id="GO:0030154">
    <property type="term" value="P:cell differentiation"/>
    <property type="evidence" value="ECO:0000316"/>
    <property type="project" value="MGI"/>
</dbReference>
<dbReference type="GO" id="GO:0071456">
    <property type="term" value="P:cellular response to hypoxia"/>
    <property type="evidence" value="ECO:0000250"/>
    <property type="project" value="UniProtKB"/>
</dbReference>
<dbReference type="GO" id="GO:0001892">
    <property type="term" value="P:embryonic placenta development"/>
    <property type="evidence" value="ECO:0000316"/>
    <property type="project" value="MGI"/>
</dbReference>
<dbReference type="GO" id="GO:0002070">
    <property type="term" value="P:epithelial cell maturation"/>
    <property type="evidence" value="ECO:0000315"/>
    <property type="project" value="MGI"/>
</dbReference>
<dbReference type="GO" id="GO:0030218">
    <property type="term" value="P:erythrocyte differentiation"/>
    <property type="evidence" value="ECO:0000315"/>
    <property type="project" value="MGI"/>
</dbReference>
<dbReference type="GO" id="GO:0010467">
    <property type="term" value="P:gene expression"/>
    <property type="evidence" value="ECO:0000315"/>
    <property type="project" value="MGI"/>
</dbReference>
<dbReference type="GO" id="GO:0030097">
    <property type="term" value="P:hemopoiesis"/>
    <property type="evidence" value="ECO:0000315"/>
    <property type="project" value="MGI"/>
</dbReference>
<dbReference type="GO" id="GO:0030324">
    <property type="term" value="P:lung development"/>
    <property type="evidence" value="ECO:0000315"/>
    <property type="project" value="MGI"/>
</dbReference>
<dbReference type="GO" id="GO:0007005">
    <property type="term" value="P:mitochondrion organization"/>
    <property type="evidence" value="ECO:0000315"/>
    <property type="project" value="MGI"/>
</dbReference>
<dbReference type="GO" id="GO:0042789">
    <property type="term" value="P:mRNA transcription by RNA polymerase II"/>
    <property type="evidence" value="ECO:0000314"/>
    <property type="project" value="MGI"/>
</dbReference>
<dbReference type="GO" id="GO:0060586">
    <property type="term" value="P:multicellular organismal-level iron ion homeostasis"/>
    <property type="evidence" value="ECO:0000316"/>
    <property type="project" value="MGI"/>
</dbReference>
<dbReference type="GO" id="GO:0048625">
    <property type="term" value="P:myoblast fate commitment"/>
    <property type="evidence" value="ECO:0000315"/>
    <property type="project" value="BHF-UCL"/>
</dbReference>
<dbReference type="GO" id="GO:0042415">
    <property type="term" value="P:norepinephrine metabolic process"/>
    <property type="evidence" value="ECO:0000315"/>
    <property type="project" value="MGI"/>
</dbReference>
<dbReference type="GO" id="GO:0120162">
    <property type="term" value="P:positive regulation of cold-induced thermogenesis"/>
    <property type="evidence" value="ECO:0000315"/>
    <property type="project" value="YuBioLab"/>
</dbReference>
<dbReference type="GO" id="GO:0045944">
    <property type="term" value="P:positive regulation of transcription by RNA polymerase II"/>
    <property type="evidence" value="ECO:0000314"/>
    <property type="project" value="MGI"/>
</dbReference>
<dbReference type="GO" id="GO:0002027">
    <property type="term" value="P:regulation of heart rate"/>
    <property type="evidence" value="ECO:0000315"/>
    <property type="project" value="MGI"/>
</dbReference>
<dbReference type="GO" id="GO:2000434">
    <property type="term" value="P:regulation of protein neddylation"/>
    <property type="evidence" value="ECO:0000250"/>
    <property type="project" value="UniProtKB"/>
</dbReference>
<dbReference type="GO" id="GO:0006357">
    <property type="term" value="P:regulation of transcription by RNA polymerase II"/>
    <property type="evidence" value="ECO:0000314"/>
    <property type="project" value="MGI"/>
</dbReference>
<dbReference type="GO" id="GO:0001666">
    <property type="term" value="P:response to hypoxia"/>
    <property type="evidence" value="ECO:0000315"/>
    <property type="project" value="MGI"/>
</dbReference>
<dbReference type="GO" id="GO:0006979">
    <property type="term" value="P:response to oxidative stress"/>
    <property type="evidence" value="ECO:0000315"/>
    <property type="project" value="MGI"/>
</dbReference>
<dbReference type="GO" id="GO:0043129">
    <property type="term" value="P:surfactant homeostasis"/>
    <property type="evidence" value="ECO:0000315"/>
    <property type="project" value="MGI"/>
</dbReference>
<dbReference type="GO" id="GO:0006366">
    <property type="term" value="P:transcription by RNA polymerase II"/>
    <property type="evidence" value="ECO:0000315"/>
    <property type="project" value="MGI"/>
</dbReference>
<dbReference type="GO" id="GO:0007601">
    <property type="term" value="P:visual perception"/>
    <property type="evidence" value="ECO:0000315"/>
    <property type="project" value="MGI"/>
</dbReference>
<dbReference type="CDD" id="cd19728">
    <property type="entry name" value="bHLH-PAS_HIF2a_PASD2"/>
    <property type="match status" value="1"/>
</dbReference>
<dbReference type="CDD" id="cd00130">
    <property type="entry name" value="PAS"/>
    <property type="match status" value="2"/>
</dbReference>
<dbReference type="FunFam" id="3.30.450.20:FF:000005">
    <property type="entry name" value="Hypoxia-inducible factor 1 subunit alpha"/>
    <property type="match status" value="1"/>
</dbReference>
<dbReference type="FunFam" id="3.30.450.20:FF:000015">
    <property type="entry name" value="Hypoxia-inducible factor 1-alpha isoform 1"/>
    <property type="match status" value="1"/>
</dbReference>
<dbReference type="FunFam" id="4.10.280.10:FF:000076">
    <property type="entry name" value="hypoxia-inducible factor 3-alpha isoform X1"/>
    <property type="match status" value="1"/>
</dbReference>
<dbReference type="Gene3D" id="4.10.280.10">
    <property type="entry name" value="Helix-loop-helix DNA-binding domain"/>
    <property type="match status" value="1"/>
</dbReference>
<dbReference type="Gene3D" id="3.30.450.20">
    <property type="entry name" value="PAS domain"/>
    <property type="match status" value="2"/>
</dbReference>
<dbReference type="InterPro" id="IPR011598">
    <property type="entry name" value="bHLH_dom"/>
</dbReference>
<dbReference type="InterPro" id="IPR014887">
    <property type="entry name" value="HIF-1_CTAD"/>
</dbReference>
<dbReference type="InterPro" id="IPR021537">
    <property type="entry name" value="HIF_alpha-like"/>
</dbReference>
<dbReference type="InterPro" id="IPR036638">
    <property type="entry name" value="HLH_DNA-bd_sf"/>
</dbReference>
<dbReference type="InterPro" id="IPR001067">
    <property type="entry name" value="Nuc_translocat"/>
</dbReference>
<dbReference type="InterPro" id="IPR001610">
    <property type="entry name" value="PAC"/>
</dbReference>
<dbReference type="InterPro" id="IPR000014">
    <property type="entry name" value="PAS"/>
</dbReference>
<dbReference type="InterPro" id="IPR035965">
    <property type="entry name" value="PAS-like_dom_sf"/>
</dbReference>
<dbReference type="InterPro" id="IPR013767">
    <property type="entry name" value="PAS_fold"/>
</dbReference>
<dbReference type="NCBIfam" id="TIGR00229">
    <property type="entry name" value="sensory_box"/>
    <property type="match status" value="2"/>
</dbReference>
<dbReference type="PANTHER" id="PTHR23043:SF8">
    <property type="entry name" value="ENDOTHELIAL PAS DOMAIN-CONTAINING PROTEIN 1"/>
    <property type="match status" value="1"/>
</dbReference>
<dbReference type="PANTHER" id="PTHR23043">
    <property type="entry name" value="HYPOXIA-INDUCIBLE FACTOR 1 ALPHA"/>
    <property type="match status" value="1"/>
</dbReference>
<dbReference type="Pfam" id="PF23171">
    <property type="entry name" value="bHLH_HIF1A"/>
    <property type="match status" value="1"/>
</dbReference>
<dbReference type="Pfam" id="PF11413">
    <property type="entry name" value="HIF-1"/>
    <property type="match status" value="1"/>
</dbReference>
<dbReference type="Pfam" id="PF08778">
    <property type="entry name" value="HIF-1a_CTAD"/>
    <property type="match status" value="1"/>
</dbReference>
<dbReference type="Pfam" id="PF00989">
    <property type="entry name" value="PAS"/>
    <property type="match status" value="1"/>
</dbReference>
<dbReference type="Pfam" id="PF14598">
    <property type="entry name" value="PAS_11"/>
    <property type="match status" value="1"/>
</dbReference>
<dbReference type="PRINTS" id="PR00785">
    <property type="entry name" value="NCTRNSLOCATR"/>
</dbReference>
<dbReference type="SMART" id="SM00353">
    <property type="entry name" value="HLH"/>
    <property type="match status" value="1"/>
</dbReference>
<dbReference type="SMART" id="SM00086">
    <property type="entry name" value="PAC"/>
    <property type="match status" value="1"/>
</dbReference>
<dbReference type="SMART" id="SM00091">
    <property type="entry name" value="PAS"/>
    <property type="match status" value="2"/>
</dbReference>
<dbReference type="SUPFAM" id="SSF47459">
    <property type="entry name" value="HLH, helix-loop-helix DNA-binding domain"/>
    <property type="match status" value="1"/>
</dbReference>
<dbReference type="SUPFAM" id="SSF55785">
    <property type="entry name" value="PYP-like sensor domain (PAS domain)"/>
    <property type="match status" value="2"/>
</dbReference>
<dbReference type="PROSITE" id="PS50888">
    <property type="entry name" value="BHLH"/>
    <property type="match status" value="1"/>
</dbReference>
<dbReference type="PROSITE" id="PS50112">
    <property type="entry name" value="PAS"/>
    <property type="match status" value="2"/>
</dbReference>
<organism>
    <name type="scientific">Mus musculus</name>
    <name type="common">Mouse</name>
    <dbReference type="NCBI Taxonomy" id="10090"/>
    <lineage>
        <taxon>Eukaryota</taxon>
        <taxon>Metazoa</taxon>
        <taxon>Chordata</taxon>
        <taxon>Craniata</taxon>
        <taxon>Vertebrata</taxon>
        <taxon>Euteleostomi</taxon>
        <taxon>Mammalia</taxon>
        <taxon>Eutheria</taxon>
        <taxon>Euarchontoglires</taxon>
        <taxon>Glires</taxon>
        <taxon>Rodentia</taxon>
        <taxon>Myomorpha</taxon>
        <taxon>Muroidea</taxon>
        <taxon>Muridae</taxon>
        <taxon>Murinae</taxon>
        <taxon>Mus</taxon>
        <taxon>Mus</taxon>
    </lineage>
</organism>
<sequence>MTADKEKKRSSSELRKEKSRDAARCRRSKETEVFYELAHELPLPHSVSSHLDKASIMRLAISFLRTHKLLSSVCSENESEAEADQQMDNLYLKALEGFIAVVTQDGDMIFLSENISKFMGLTQVELTGHSIFDFTHPCDHEEIRENLTLKNGSGFGKKSKDVSTERDFFMRMKCTVTNRGRTVNLKSATWKVLHCTGQVRVYNNCPPHSSLCGSKEPLLSCLIIMCEPIQHPSHMDIPLDSKTFLSRHSMDMKFTYCDDRILELIGYHPEELLGRSAYEFYHALDSENMTKSHQNLCTKGQVVSGQYRMLAKHGGYVWLETQGTVIYNPRNLQPQCIMCVNYVLSEIEKNDVVFSMDQTESLFKPHLMAMNSIFDSSDDVAVTEKSNYLFTKLKEEPEELAQLAPTPGDAIISLDFGSQNFDEPSAYGKAILPPGQPWVSGLRSHSAQSESGSLPAFTVPQADTPGNTTPSASSSSSCSTPSSPEDYYSSLENPLKIEVIEKLFAMDTEPRDPGSTQTDFSELDLETLAPYIPMDGEDFQLSPICPEEPLMPESPQPTPQHCFSTMTSIFQPLTPGATHGPFFLDKYPQQLESRKTESEHWPMSSIFFDAGSKGSLSPCCGQASTPLSSMGGRSNTQWPPDPPLHFGPTKWPVGDQSAESLGALPVGSSQLEPPSAPPHVSMFKMRSAKDFGARGPYMMSPAMIALSNKLKLKRQLEYEEQAFQDTSGGDPPGTSSSHLMWKRMKSLMGGTCPLMPDKTISANMAPDEFTQKSMRGLGQPLRHLPPPQPPSTRSSGENAKTGFPPQCYASQFQDYGPPGAQKVSGVASRLLGPSFEPYLLPELTRYDCEVNVPVPGSSTLLQGRDLLRALDQAT</sequence>
<name>EPAS1_MOUSE</name>
<feature type="chain" id="PRO_0000127420" description="Endothelial PAS domain-containing protein 1">
    <location>
        <begin position="1"/>
        <end position="874"/>
    </location>
</feature>
<feature type="domain" description="bHLH" evidence="4">
    <location>
        <begin position="14"/>
        <end position="67"/>
    </location>
</feature>
<feature type="domain" description="PAS 1" evidence="3">
    <location>
        <begin position="84"/>
        <end position="154"/>
    </location>
</feature>
<feature type="domain" description="PAS 2" evidence="3">
    <location>
        <begin position="230"/>
        <end position="300"/>
    </location>
</feature>
<feature type="domain" description="PAC">
    <location>
        <begin position="304"/>
        <end position="347"/>
    </location>
</feature>
<feature type="region of interest" description="Disordered" evidence="5">
    <location>
        <begin position="1"/>
        <end position="23"/>
    </location>
</feature>
<feature type="region of interest" description="DNA-binding" evidence="10">
    <location>
        <begin position="26"/>
        <end position="53"/>
    </location>
</feature>
<feature type="region of interest" description="Required for heterodimer formation with ARNT" evidence="10">
    <location>
        <begin position="171"/>
        <end position="192"/>
    </location>
</feature>
<feature type="region of interest" description="Disordered" evidence="5">
    <location>
        <begin position="438"/>
        <end position="489"/>
    </location>
</feature>
<feature type="region of interest" description="NTAD">
    <location>
        <begin position="495"/>
        <end position="541"/>
    </location>
</feature>
<feature type="region of interest" description="Disordered" evidence="5">
    <location>
        <begin position="777"/>
        <end position="803"/>
    </location>
</feature>
<feature type="region of interest" description="CTAD">
    <location>
        <begin position="834"/>
        <end position="874"/>
    </location>
</feature>
<feature type="compositionally biased region" description="Polar residues" evidence="5">
    <location>
        <begin position="443"/>
        <end position="452"/>
    </location>
</feature>
<feature type="compositionally biased region" description="Low complexity" evidence="5">
    <location>
        <begin position="464"/>
        <end position="484"/>
    </location>
</feature>
<feature type="modified residue" description="4-hydroxyproline" evidence="1">
    <location>
        <position position="405"/>
    </location>
</feature>
<feature type="modified residue" description="4-hydroxyproline" evidence="1">
    <location>
        <position position="530"/>
    </location>
</feature>
<feature type="modified residue" description="Phosphothreonine" evidence="7">
    <location>
        <position position="844"/>
    </location>
</feature>
<feature type="modified residue" description="(3S)-3-hydroxyasparagine" evidence="6">
    <location>
        <position position="851"/>
    </location>
</feature>
<feature type="mutagenesis site" description="Decreases HRE DNA binding." evidence="10">
    <original>A</original>
    <variation>D</variation>
    <location>
        <position position="23"/>
    </location>
</feature>
<feature type="mutagenesis site" description="Decreases HRE DNA binding." evidence="10">
    <original>R</original>
    <variation>A</variation>
    <location>
        <position position="27"/>
    </location>
</feature>
<feature type="mutagenesis site" description="Decreases heterodimer formation with ARNT." evidence="10">
    <original>F</original>
    <variation>D</variation>
    <location>
        <position position="169"/>
    </location>
</feature>
<feature type="mutagenesis site" description="Markedly decreases heterodimer formation with ARNT. Impairs heterodimer formation with ARNT; when associated with D-192." evidence="10">
    <original>R</original>
    <variation>A</variation>
    <location>
        <position position="171"/>
    </location>
</feature>
<feature type="mutagenesis site" description="Decreases HRE DNA binding; when associated with D-186." evidence="10">
    <original>N</original>
    <variation>D</variation>
    <location>
        <position position="184"/>
    </location>
</feature>
<feature type="mutagenesis site" description="Decreases HRE DNA binding; when associated with D-184." evidence="10">
    <original>K</original>
    <variation>D</variation>
    <location>
        <position position="186"/>
    </location>
</feature>
<feature type="mutagenesis site" description="Markedly decreases heterodimer formation with ARNT. Impairs heterodimer formation with ARNT; when associated with A-171." evidence="10">
    <original>V</original>
    <variation>D</variation>
    <location>
        <position position="192"/>
    </location>
</feature>
<feature type="mutagenesis site" description="Decreases heterodimer formation with ARNT." evidence="10">
    <original>H</original>
    <variation>A</variation>
    <location>
        <position position="194"/>
    </location>
</feature>
<feature type="mutagenesis site" description="Confers transcriptional activity at normoxia; when associated with A-851." evidence="8">
    <original>P</original>
    <variation>A</variation>
    <location>
        <position position="530"/>
    </location>
</feature>
<feature type="mutagenesis site" description="Decreases interaction with CREBBP." evidence="7">
    <original>T</original>
    <variation>A</variation>
    <location>
        <position position="844"/>
    </location>
</feature>
<feature type="mutagenesis site" description="Confers transcriptional activity at normoxia; when associated with A-530." evidence="8">
    <original>N</original>
    <variation>A</variation>
    <location>
        <position position="851"/>
    </location>
</feature>
<feature type="sequence conflict" description="In Ref. 2; BAA20130." evidence="11" ref="2">
    <original>C</original>
    <variation>S</variation>
    <location>
        <position position="25"/>
    </location>
</feature>
<feature type="sequence conflict" description="In Ref. 1; AAB41496." evidence="11" ref="1">
    <original>K</original>
    <variation>KS</variation>
    <location>
        <position position="191"/>
    </location>
</feature>
<feature type="sequence conflict" description="In Ref. 3; AAC12871." evidence="11" ref="3">
    <original>VS</original>
    <variation>AA</variation>
    <location>
        <begin position="439"/>
        <end position="440"/>
    </location>
</feature>
<feature type="sequence conflict" description="In Ref. 3; AAC12871." evidence="11" ref="3">
    <original>D</original>
    <variation>G</variation>
    <location>
        <position position="463"/>
    </location>
</feature>
<feature type="sequence conflict" description="In Ref. 2; BAA20130." evidence="11" ref="2">
    <original>G</original>
    <variation>V</variation>
    <location>
        <position position="654"/>
    </location>
</feature>
<feature type="sequence conflict" description="In Ref. 2; BAA20130." evidence="11" ref="2">
    <original>A</original>
    <variation>P</variation>
    <location>
        <position position="663"/>
    </location>
</feature>
<feature type="sequence conflict" description="In Ref. 1; AAB41496." evidence="11" ref="1">
    <original>S</original>
    <variation>W</variation>
    <location>
        <position position="669"/>
    </location>
</feature>
<feature type="sequence conflict" description="In Ref. 1; AAB41496." evidence="11" ref="1">
    <original>P</original>
    <variation>L</variation>
    <location>
        <position position="673"/>
    </location>
</feature>
<feature type="sequence conflict" description="In Ref. 1; AAB41496." evidence="11" ref="1">
    <original>P</original>
    <variation>L</variation>
    <location>
        <position position="678"/>
    </location>
</feature>
<feature type="sequence conflict" description="In Ref. 3; AAC12871." evidence="11" ref="3">
    <original>D</original>
    <variation>E</variation>
    <location>
        <position position="725"/>
    </location>
</feature>
<feature type="sequence conflict" description="In Ref. 3; AAC12871." evidence="11" ref="3">
    <original>P</original>
    <variation>L</variation>
    <location>
        <position position="731"/>
    </location>
</feature>
<feature type="sequence conflict" description="In Ref. 3; AAC12871." evidence="11" ref="3">
    <original>A</original>
    <variation>G</variation>
    <location>
        <position position="762"/>
    </location>
</feature>
<feature type="sequence conflict" description="In Ref. 3; AAC12871." evidence="11" ref="3">
    <original>P</original>
    <variation>L</variation>
    <location>
        <position position="786"/>
    </location>
</feature>
<feature type="sequence conflict" description="In Ref. 3; AAC12871." evidence="11" ref="3">
    <original>S</original>
    <variation>F</variation>
    <location>
        <position position="791"/>
    </location>
</feature>
<feature type="sequence conflict" description="In Ref. 3; AAC12871." evidence="11" ref="3">
    <original>S</original>
    <variation>N</variation>
    <location>
        <position position="794"/>
    </location>
</feature>
<feature type="helix" evidence="16">
    <location>
        <begin position="27"/>
        <end position="39"/>
    </location>
</feature>
<feature type="strand" evidence="16">
    <location>
        <begin position="41"/>
        <end position="43"/>
    </location>
</feature>
<feature type="helix" evidence="16">
    <location>
        <begin position="45"/>
        <end position="48"/>
    </location>
</feature>
<feature type="helix" evidence="16">
    <location>
        <begin position="53"/>
        <end position="74"/>
    </location>
</feature>
<feature type="helix" evidence="16">
    <location>
        <begin position="88"/>
        <end position="94"/>
    </location>
</feature>
<feature type="strand" evidence="16">
    <location>
        <begin position="96"/>
        <end position="103"/>
    </location>
</feature>
<feature type="strand" evidence="16">
    <location>
        <begin position="107"/>
        <end position="111"/>
    </location>
</feature>
<feature type="helix" evidence="16">
    <location>
        <begin position="115"/>
        <end position="119"/>
    </location>
</feature>
<feature type="helix" evidence="16">
    <location>
        <begin position="123"/>
        <end position="126"/>
    </location>
</feature>
<feature type="helix" evidence="16">
    <location>
        <begin position="131"/>
        <end position="134"/>
    </location>
</feature>
<feature type="helix" evidence="16">
    <location>
        <begin position="137"/>
        <end position="147"/>
    </location>
</feature>
<feature type="strand" evidence="16">
    <location>
        <begin position="165"/>
        <end position="174"/>
    </location>
</feature>
<feature type="strand" evidence="17">
    <location>
        <begin position="178"/>
        <end position="180"/>
    </location>
</feature>
<feature type="helix" evidence="16">
    <location>
        <begin position="185"/>
        <end position="187"/>
    </location>
</feature>
<feature type="strand" evidence="16">
    <location>
        <begin position="189"/>
        <end position="200"/>
    </location>
</feature>
<feature type="strand" evidence="16">
    <location>
        <begin position="221"/>
        <end position="228"/>
    </location>
</feature>
<feature type="strand" evidence="16">
    <location>
        <begin position="243"/>
        <end position="248"/>
    </location>
</feature>
<feature type="strand" evidence="16">
    <location>
        <begin position="253"/>
        <end position="257"/>
    </location>
</feature>
<feature type="helix" evidence="16">
    <location>
        <begin position="260"/>
        <end position="265"/>
    </location>
</feature>
<feature type="helix" evidence="16">
    <location>
        <begin position="269"/>
        <end position="272"/>
    </location>
</feature>
<feature type="helix" evidence="16">
    <location>
        <begin position="277"/>
        <end position="280"/>
    </location>
</feature>
<feature type="helix" evidence="16">
    <location>
        <begin position="283"/>
        <end position="299"/>
    </location>
</feature>
<feature type="strand" evidence="16">
    <location>
        <begin position="300"/>
        <end position="303"/>
    </location>
</feature>
<feature type="strand" evidence="16">
    <location>
        <begin position="307"/>
        <end position="310"/>
    </location>
</feature>
<feature type="strand" evidence="16">
    <location>
        <begin position="314"/>
        <end position="327"/>
    </location>
</feature>
<feature type="turn" evidence="16">
    <location>
        <begin position="329"/>
        <end position="331"/>
    </location>
</feature>
<feature type="strand" evidence="16">
    <location>
        <begin position="334"/>
        <end position="343"/>
    </location>
</feature>
<feature type="helix" evidence="16">
    <location>
        <begin position="356"/>
        <end position="359"/>
    </location>
</feature>